<dbReference type="EC" id="2.5.1.6" evidence="1"/>
<dbReference type="EMBL" id="CP000123">
    <property type="protein sequence ID" value="ABC01473.1"/>
    <property type="molecule type" value="Genomic_DNA"/>
</dbReference>
<dbReference type="RefSeq" id="WP_011387351.1">
    <property type="nucleotide sequence ID" value="NC_007633.1"/>
</dbReference>
<dbReference type="SMR" id="Q2SS11"/>
<dbReference type="GeneID" id="23778566"/>
<dbReference type="KEGG" id="mcp:MCAP_0478"/>
<dbReference type="HOGENOM" id="CLU_041802_1_1_14"/>
<dbReference type="PhylomeDB" id="Q2SS11"/>
<dbReference type="UniPathway" id="UPA00315">
    <property type="reaction ID" value="UER00080"/>
</dbReference>
<dbReference type="Proteomes" id="UP000001928">
    <property type="component" value="Chromosome"/>
</dbReference>
<dbReference type="GO" id="GO:0005737">
    <property type="term" value="C:cytoplasm"/>
    <property type="evidence" value="ECO:0007669"/>
    <property type="project" value="UniProtKB-SubCell"/>
</dbReference>
<dbReference type="GO" id="GO:0005524">
    <property type="term" value="F:ATP binding"/>
    <property type="evidence" value="ECO:0007669"/>
    <property type="project" value="UniProtKB-UniRule"/>
</dbReference>
<dbReference type="GO" id="GO:0000287">
    <property type="term" value="F:magnesium ion binding"/>
    <property type="evidence" value="ECO:0007669"/>
    <property type="project" value="UniProtKB-UniRule"/>
</dbReference>
<dbReference type="GO" id="GO:0004478">
    <property type="term" value="F:methionine adenosyltransferase activity"/>
    <property type="evidence" value="ECO:0007669"/>
    <property type="project" value="UniProtKB-UniRule"/>
</dbReference>
<dbReference type="GO" id="GO:0006730">
    <property type="term" value="P:one-carbon metabolic process"/>
    <property type="evidence" value="ECO:0007669"/>
    <property type="project" value="UniProtKB-KW"/>
</dbReference>
<dbReference type="GO" id="GO:0006556">
    <property type="term" value="P:S-adenosylmethionine biosynthetic process"/>
    <property type="evidence" value="ECO:0007669"/>
    <property type="project" value="UniProtKB-UniRule"/>
</dbReference>
<dbReference type="CDD" id="cd18079">
    <property type="entry name" value="S-AdoMet_synt"/>
    <property type="match status" value="1"/>
</dbReference>
<dbReference type="FunFam" id="3.30.300.10:FF:000003">
    <property type="entry name" value="S-adenosylmethionine synthase"/>
    <property type="match status" value="1"/>
</dbReference>
<dbReference type="Gene3D" id="3.30.300.10">
    <property type="match status" value="3"/>
</dbReference>
<dbReference type="HAMAP" id="MF_00086">
    <property type="entry name" value="S_AdoMet_synth1"/>
    <property type="match status" value="1"/>
</dbReference>
<dbReference type="InterPro" id="IPR022631">
    <property type="entry name" value="ADOMET_SYNTHASE_CS"/>
</dbReference>
<dbReference type="InterPro" id="IPR022630">
    <property type="entry name" value="S-AdoMet_synt_C"/>
</dbReference>
<dbReference type="InterPro" id="IPR022629">
    <property type="entry name" value="S-AdoMet_synt_central"/>
</dbReference>
<dbReference type="InterPro" id="IPR022628">
    <property type="entry name" value="S-AdoMet_synt_N"/>
</dbReference>
<dbReference type="InterPro" id="IPR002133">
    <property type="entry name" value="S-AdoMet_synthetase"/>
</dbReference>
<dbReference type="InterPro" id="IPR022636">
    <property type="entry name" value="S-AdoMet_synthetase_sfam"/>
</dbReference>
<dbReference type="NCBIfam" id="TIGR01034">
    <property type="entry name" value="metK"/>
    <property type="match status" value="1"/>
</dbReference>
<dbReference type="PANTHER" id="PTHR11964">
    <property type="entry name" value="S-ADENOSYLMETHIONINE SYNTHETASE"/>
    <property type="match status" value="1"/>
</dbReference>
<dbReference type="Pfam" id="PF02773">
    <property type="entry name" value="S-AdoMet_synt_C"/>
    <property type="match status" value="1"/>
</dbReference>
<dbReference type="Pfam" id="PF02772">
    <property type="entry name" value="S-AdoMet_synt_M"/>
    <property type="match status" value="1"/>
</dbReference>
<dbReference type="Pfam" id="PF00438">
    <property type="entry name" value="S-AdoMet_synt_N"/>
    <property type="match status" value="1"/>
</dbReference>
<dbReference type="PIRSF" id="PIRSF000497">
    <property type="entry name" value="MAT"/>
    <property type="match status" value="1"/>
</dbReference>
<dbReference type="SUPFAM" id="SSF55973">
    <property type="entry name" value="S-adenosylmethionine synthetase"/>
    <property type="match status" value="3"/>
</dbReference>
<dbReference type="PROSITE" id="PS00376">
    <property type="entry name" value="ADOMET_SYNTHASE_1"/>
    <property type="match status" value="1"/>
</dbReference>
<dbReference type="PROSITE" id="PS00377">
    <property type="entry name" value="ADOMET_SYNTHASE_2"/>
    <property type="match status" value="1"/>
</dbReference>
<name>METK_MYCCT</name>
<sequence>MNQNIEKRLFTSESVSEGHPDKICDQISDAILDEVLKQDKNAKVACEVFTTTNYLLIGGQISSTAIVDYEQVARDVLKKIGYVDDAYGINANTCKIDIKIESQSPDIAQGVELSNDQIGAGDQGIMFGYATNESKTYLPLAITIAHELVYNATSQRKKGLFKWARPDMKSQVTIDYTNINNPKIDTILMSIQHDPNYNEIEFKKYIKENIMDLVAKEFNLNTDFKVLINPTGRFVIGGPQGDTGLTGRKIIADTYGGYSRHGGGAFSGKDSTKVDRSAAYMCRYVAKNLVAAGLADKIEIQVSYAIGISQPISIFIETFNTHKVDLNTIYKAVYENFDFSVSSMIKTLDLKKPIFFKTSKYGHFGKKDLSWEKLDKIEVLKEYKKCS</sequence>
<evidence type="ECO:0000255" key="1">
    <source>
        <dbReference type="HAMAP-Rule" id="MF_00086"/>
    </source>
</evidence>
<organism>
    <name type="scientific">Mycoplasma capricolum subsp. capricolum (strain California kid / ATCC 27343 / NCTC 10154)</name>
    <dbReference type="NCBI Taxonomy" id="340047"/>
    <lineage>
        <taxon>Bacteria</taxon>
        <taxon>Bacillati</taxon>
        <taxon>Mycoplasmatota</taxon>
        <taxon>Mollicutes</taxon>
        <taxon>Mycoplasmataceae</taxon>
        <taxon>Mycoplasma</taxon>
    </lineage>
</organism>
<protein>
    <recommendedName>
        <fullName evidence="1">S-adenosylmethionine synthase</fullName>
        <shortName evidence="1">AdoMet synthase</shortName>
        <ecNumber evidence="1">2.5.1.6</ecNumber>
    </recommendedName>
    <alternativeName>
        <fullName evidence="1">MAT</fullName>
    </alternativeName>
    <alternativeName>
        <fullName evidence="1">Methionine adenosyltransferase</fullName>
    </alternativeName>
</protein>
<gene>
    <name evidence="1" type="primary">metK</name>
    <name type="ordered locus">MCAP_0478</name>
</gene>
<accession>Q2SS11</accession>
<reference key="1">
    <citation type="submission" date="2005-09" db="EMBL/GenBank/DDBJ databases">
        <authorList>
            <person name="Glass J.I."/>
            <person name="Lartigue C."/>
            <person name="Pfannkoch C."/>
            <person name="Baden-Tillson H."/>
            <person name="Smith H.O."/>
            <person name="Venter J.C."/>
            <person name="Roske K."/>
            <person name="Wise K.S."/>
            <person name="Calcutt M.J."/>
            <person name="Nelson W.C."/>
            <person name="Nierman W.C."/>
        </authorList>
    </citation>
    <scope>NUCLEOTIDE SEQUENCE [LARGE SCALE GENOMIC DNA]</scope>
    <source>
        <strain>California kid / ATCC 27343 / NCTC 10154</strain>
    </source>
</reference>
<feature type="chain" id="PRO_0000241006" description="S-adenosylmethionine synthase">
    <location>
        <begin position="1"/>
        <end position="387"/>
    </location>
</feature>
<feature type="region of interest" description="Flexible loop" evidence="1">
    <location>
        <begin position="103"/>
        <end position="113"/>
    </location>
</feature>
<feature type="binding site" description="in other chain" evidence="1">
    <location>
        <position position="19"/>
    </location>
    <ligand>
        <name>ATP</name>
        <dbReference type="ChEBI" id="CHEBI:30616"/>
        <note>ligand shared between two neighboring subunits</note>
    </ligand>
</feature>
<feature type="binding site" evidence="1">
    <location>
        <position position="21"/>
    </location>
    <ligand>
        <name>Mg(2+)</name>
        <dbReference type="ChEBI" id="CHEBI:18420"/>
    </ligand>
</feature>
<feature type="binding site" evidence="1">
    <location>
        <position position="47"/>
    </location>
    <ligand>
        <name>K(+)</name>
        <dbReference type="ChEBI" id="CHEBI:29103"/>
    </ligand>
</feature>
<feature type="binding site" description="in other chain" evidence="1">
    <location>
        <position position="103"/>
    </location>
    <ligand>
        <name>L-methionine</name>
        <dbReference type="ChEBI" id="CHEBI:57844"/>
        <note>ligand shared between two neighboring subunits</note>
    </ligand>
</feature>
<feature type="binding site" description="in other chain" evidence="1">
    <location>
        <begin position="167"/>
        <end position="169"/>
    </location>
    <ligand>
        <name>ATP</name>
        <dbReference type="ChEBI" id="CHEBI:30616"/>
        <note>ligand shared between two neighboring subunits</note>
    </ligand>
</feature>
<feature type="binding site" description="in other chain" evidence="1">
    <location>
        <begin position="233"/>
        <end position="234"/>
    </location>
    <ligand>
        <name>ATP</name>
        <dbReference type="ChEBI" id="CHEBI:30616"/>
        <note>ligand shared between two neighboring subunits</note>
    </ligand>
</feature>
<feature type="binding site" evidence="1">
    <location>
        <position position="242"/>
    </location>
    <ligand>
        <name>ATP</name>
        <dbReference type="ChEBI" id="CHEBI:30616"/>
        <note>ligand shared between two neighboring subunits</note>
    </ligand>
</feature>
<feature type="binding site" evidence="1">
    <location>
        <position position="242"/>
    </location>
    <ligand>
        <name>L-methionine</name>
        <dbReference type="ChEBI" id="CHEBI:57844"/>
        <note>ligand shared between two neighboring subunits</note>
    </ligand>
</feature>
<feature type="binding site" description="in other chain" evidence="1">
    <location>
        <begin position="248"/>
        <end position="249"/>
    </location>
    <ligand>
        <name>ATP</name>
        <dbReference type="ChEBI" id="CHEBI:30616"/>
        <note>ligand shared between two neighboring subunits</note>
    </ligand>
</feature>
<feature type="binding site" evidence="1">
    <location>
        <position position="265"/>
    </location>
    <ligand>
        <name>ATP</name>
        <dbReference type="ChEBI" id="CHEBI:30616"/>
        <note>ligand shared between two neighboring subunits</note>
    </ligand>
</feature>
<feature type="binding site" evidence="1">
    <location>
        <position position="269"/>
    </location>
    <ligand>
        <name>ATP</name>
        <dbReference type="ChEBI" id="CHEBI:30616"/>
        <note>ligand shared between two neighboring subunits</note>
    </ligand>
</feature>
<feature type="binding site" description="in other chain" evidence="1">
    <location>
        <position position="273"/>
    </location>
    <ligand>
        <name>L-methionine</name>
        <dbReference type="ChEBI" id="CHEBI:57844"/>
        <note>ligand shared between two neighboring subunits</note>
    </ligand>
</feature>
<proteinExistence type="inferred from homology"/>
<keyword id="KW-0067">ATP-binding</keyword>
<keyword id="KW-0963">Cytoplasm</keyword>
<keyword id="KW-0460">Magnesium</keyword>
<keyword id="KW-0479">Metal-binding</keyword>
<keyword id="KW-0547">Nucleotide-binding</keyword>
<keyword id="KW-0554">One-carbon metabolism</keyword>
<keyword id="KW-0630">Potassium</keyword>
<keyword id="KW-0808">Transferase</keyword>
<comment type="function">
    <text evidence="1">Catalyzes the formation of S-adenosylmethionine (AdoMet) from methionine and ATP. The overall synthetic reaction is composed of two sequential steps, AdoMet formation and the subsequent tripolyphosphate hydrolysis which occurs prior to release of AdoMet from the enzyme.</text>
</comment>
<comment type="catalytic activity">
    <reaction evidence="1">
        <text>L-methionine + ATP + H2O = S-adenosyl-L-methionine + phosphate + diphosphate</text>
        <dbReference type="Rhea" id="RHEA:21080"/>
        <dbReference type="ChEBI" id="CHEBI:15377"/>
        <dbReference type="ChEBI" id="CHEBI:30616"/>
        <dbReference type="ChEBI" id="CHEBI:33019"/>
        <dbReference type="ChEBI" id="CHEBI:43474"/>
        <dbReference type="ChEBI" id="CHEBI:57844"/>
        <dbReference type="ChEBI" id="CHEBI:59789"/>
        <dbReference type="EC" id="2.5.1.6"/>
    </reaction>
</comment>
<comment type="cofactor">
    <cofactor evidence="1">
        <name>Mg(2+)</name>
        <dbReference type="ChEBI" id="CHEBI:18420"/>
    </cofactor>
    <text evidence="1">Binds 2 divalent ions per subunit.</text>
</comment>
<comment type="cofactor">
    <cofactor evidence="1">
        <name>K(+)</name>
        <dbReference type="ChEBI" id="CHEBI:29103"/>
    </cofactor>
    <text evidence="1">Binds 1 potassium ion per subunit.</text>
</comment>
<comment type="pathway">
    <text evidence="1">Amino-acid biosynthesis; S-adenosyl-L-methionine biosynthesis; S-adenosyl-L-methionine from L-methionine: step 1/1.</text>
</comment>
<comment type="subunit">
    <text evidence="1">Homotetramer; dimer of dimers.</text>
</comment>
<comment type="subcellular location">
    <subcellularLocation>
        <location evidence="1">Cytoplasm</location>
    </subcellularLocation>
</comment>
<comment type="similarity">
    <text evidence="1">Belongs to the AdoMet synthase family.</text>
</comment>